<comment type="function">
    <text evidence="1">Part of the tripartite efflux system MacAB-TolC. MacB is a non-canonical ABC transporter that contains transmembrane domains (TMD), which form a pore in the inner membrane, and an ATP-binding domain (NBD), which is responsible for energy generation. Confers resistance against macrolides.</text>
</comment>
<comment type="subunit">
    <text evidence="1">Homodimer. Part of the tripartite efflux system MacAB-TolC, which is composed of an inner membrane transporter, MacB, a periplasmic membrane fusion protein, MacA, and an outer membrane component, TolC. The complex forms a large protein conduit and can translocate molecules across both the inner and outer membranes. Interacts with MacA.</text>
</comment>
<comment type="subcellular location">
    <subcellularLocation>
        <location evidence="1">Cell inner membrane</location>
        <topology evidence="1">Multi-pass membrane protein</topology>
    </subcellularLocation>
</comment>
<comment type="similarity">
    <text evidence="1">Belongs to the ABC transporter superfamily. Macrolide exporter (TC 3.A.1.122) family.</text>
</comment>
<accession>Q8XED0</accession>
<accession>Q7AG68</accession>
<protein>
    <recommendedName>
        <fullName evidence="1">Macrolide export ATP-binding/permease protein MacB</fullName>
        <ecNumber evidence="1">7.6.2.-</ecNumber>
    </recommendedName>
</protein>
<evidence type="ECO:0000255" key="1">
    <source>
        <dbReference type="HAMAP-Rule" id="MF_01720"/>
    </source>
</evidence>
<evidence type="ECO:0000305" key="2"/>
<keyword id="KW-0046">Antibiotic resistance</keyword>
<keyword id="KW-0067">ATP-binding</keyword>
<keyword id="KW-0997">Cell inner membrane</keyword>
<keyword id="KW-1003">Cell membrane</keyword>
<keyword id="KW-0472">Membrane</keyword>
<keyword id="KW-0547">Nucleotide-binding</keyword>
<keyword id="KW-1185">Reference proteome</keyword>
<keyword id="KW-1278">Translocase</keyword>
<keyword id="KW-0812">Transmembrane</keyword>
<keyword id="KW-1133">Transmembrane helix</keyword>
<keyword id="KW-0813">Transport</keyword>
<reference key="1">
    <citation type="journal article" date="2001" name="Nature">
        <title>Genome sequence of enterohaemorrhagic Escherichia coli O157:H7.</title>
        <authorList>
            <person name="Perna N.T."/>
            <person name="Plunkett G. III"/>
            <person name="Burland V."/>
            <person name="Mau B."/>
            <person name="Glasner J.D."/>
            <person name="Rose D.J."/>
            <person name="Mayhew G.F."/>
            <person name="Evans P.S."/>
            <person name="Gregor J."/>
            <person name="Kirkpatrick H.A."/>
            <person name="Posfai G."/>
            <person name="Hackett J."/>
            <person name="Klink S."/>
            <person name="Boutin A."/>
            <person name="Shao Y."/>
            <person name="Miller L."/>
            <person name="Grotbeck E.J."/>
            <person name="Davis N.W."/>
            <person name="Lim A."/>
            <person name="Dimalanta E.T."/>
            <person name="Potamousis K."/>
            <person name="Apodaca J."/>
            <person name="Anantharaman T.S."/>
            <person name="Lin J."/>
            <person name="Yen G."/>
            <person name="Schwartz D.C."/>
            <person name="Welch R.A."/>
            <person name="Blattner F.R."/>
        </authorList>
    </citation>
    <scope>NUCLEOTIDE SEQUENCE [LARGE SCALE GENOMIC DNA]</scope>
    <source>
        <strain>O157:H7 / EDL933 / ATCC 700927 / EHEC</strain>
    </source>
</reference>
<reference key="2">
    <citation type="journal article" date="2001" name="DNA Res.">
        <title>Complete genome sequence of enterohemorrhagic Escherichia coli O157:H7 and genomic comparison with a laboratory strain K-12.</title>
        <authorList>
            <person name="Hayashi T."/>
            <person name="Makino K."/>
            <person name="Ohnishi M."/>
            <person name="Kurokawa K."/>
            <person name="Ishii K."/>
            <person name="Yokoyama K."/>
            <person name="Han C.-G."/>
            <person name="Ohtsubo E."/>
            <person name="Nakayama K."/>
            <person name="Murata T."/>
            <person name="Tanaka M."/>
            <person name="Tobe T."/>
            <person name="Iida T."/>
            <person name="Takami H."/>
            <person name="Honda T."/>
            <person name="Sasakawa C."/>
            <person name="Ogasawara N."/>
            <person name="Yasunaga T."/>
            <person name="Kuhara S."/>
            <person name="Shiba T."/>
            <person name="Hattori M."/>
            <person name="Shinagawa H."/>
        </authorList>
    </citation>
    <scope>NUCLEOTIDE SEQUENCE [LARGE SCALE GENOMIC DNA]</scope>
    <source>
        <strain>O157:H7 / Sakai / RIMD 0509952 / EHEC</strain>
    </source>
</reference>
<feature type="chain" id="PRO_0000269941" description="Macrolide export ATP-binding/permease protein MacB">
    <location>
        <begin position="1"/>
        <end position="648"/>
    </location>
</feature>
<feature type="transmembrane region" description="Helical" evidence="1">
    <location>
        <begin position="273"/>
        <end position="293"/>
    </location>
</feature>
<feature type="transmembrane region" description="Helical" evidence="1">
    <location>
        <begin position="523"/>
        <end position="543"/>
    </location>
</feature>
<feature type="transmembrane region" description="Helical" evidence="1">
    <location>
        <begin position="576"/>
        <end position="596"/>
    </location>
</feature>
<feature type="transmembrane region" description="Helical" evidence="1">
    <location>
        <begin position="611"/>
        <end position="631"/>
    </location>
</feature>
<feature type="domain" description="ABC transporter" evidence="1">
    <location>
        <begin position="5"/>
        <end position="243"/>
    </location>
</feature>
<feature type="binding site" evidence="1">
    <location>
        <begin position="41"/>
        <end position="48"/>
    </location>
    <ligand>
        <name>ATP</name>
        <dbReference type="ChEBI" id="CHEBI:30616"/>
    </ligand>
</feature>
<feature type="sequence conflict" description="In Ref. 2; BAB34388." evidence="2" ref="2">
    <original>CEQ</original>
    <variation>GEE</variation>
    <location>
        <begin position="180"/>
        <end position="182"/>
    </location>
</feature>
<name>MACB_ECO57</name>
<sequence length="648" mass="70722">MTPLLELKDIRRSYPAGDEQVEVLKGITLDIYAGEMVAIVGASGSGKSTLMNILGCLDKATSGTYRVAGQDVATLDADALAQLRREHFGFIFQRYHLLSHLTAEQNVEVPAVYAGLERKQRLLRAQELLQRLGLEDRTEYYPAQLSGGQQQRVSIARALMNGGQVILADEPTGALDSHSCEQVMAILHQLRDRGHTVIIVTHDPQVAAQAERVIEIRDGEIVRNPPAIEKVNVAGGTEPVVNTASGWRQFVSGFNEALTMAWRALAANKMRTLLTMLGIIIGIASVVSIVVVGDAAKQMVLADIRSIGTNTIDVYPGKDFGDDDPQYQQALKYDDLIAIQKQPWVASATPAVSQNLRLRYNNVDVAASANGVSGDYFNVYGMTFSEGNTFNQEQLNGRAQVVVLDSNTRRQLFPHKADVVGEVILVGNMPARVIGVAEEKQSMFGSSKVLRVWLPYSTMSGRVMGQSWLNSITVRVKEGFDSAEAEQQLTRLLSLRHGKKDFFTWNMDGVLKTVEKTTRTLQLFMTLVAVISLVVGGIGVMNIMLVSVTERTREIGIRMAVGARASDVLQQFLIEAVLVCLVGGALGITLSLLIAFTLQLFLPGWEIGFSPLALLLAFLCSTVTGILFGWLPARNAARLDPVDALARE</sequence>
<proteinExistence type="inferred from homology"/>
<dbReference type="EC" id="7.6.2.-" evidence="1"/>
<dbReference type="EMBL" id="AE005174">
    <property type="protein sequence ID" value="AAG55261.1"/>
    <property type="molecule type" value="Genomic_DNA"/>
</dbReference>
<dbReference type="EMBL" id="BA000007">
    <property type="protein sequence ID" value="BAB34388.1"/>
    <property type="molecule type" value="Genomic_DNA"/>
</dbReference>
<dbReference type="PIR" id="A85600">
    <property type="entry name" value="A85600"/>
</dbReference>
<dbReference type="PIR" id="E90749">
    <property type="entry name" value="E90749"/>
</dbReference>
<dbReference type="RefSeq" id="NP_308992.1">
    <property type="nucleotide sequence ID" value="NC_002695.1"/>
</dbReference>
<dbReference type="SMR" id="Q8XED0"/>
<dbReference type="STRING" id="155864.Z1116"/>
<dbReference type="GeneID" id="917704"/>
<dbReference type="KEGG" id="ece:Z1116"/>
<dbReference type="KEGG" id="ecs:ECs_0965"/>
<dbReference type="PATRIC" id="fig|386585.9.peg.1081"/>
<dbReference type="eggNOG" id="COG0577">
    <property type="taxonomic scope" value="Bacteria"/>
</dbReference>
<dbReference type="eggNOG" id="COG1136">
    <property type="taxonomic scope" value="Bacteria"/>
</dbReference>
<dbReference type="HOGENOM" id="CLU_000604_78_2_6"/>
<dbReference type="Proteomes" id="UP000000558">
    <property type="component" value="Chromosome"/>
</dbReference>
<dbReference type="Proteomes" id="UP000002519">
    <property type="component" value="Chromosome"/>
</dbReference>
<dbReference type="GO" id="GO:0005886">
    <property type="term" value="C:plasma membrane"/>
    <property type="evidence" value="ECO:0007669"/>
    <property type="project" value="UniProtKB-SubCell"/>
</dbReference>
<dbReference type="GO" id="GO:0005524">
    <property type="term" value="F:ATP binding"/>
    <property type="evidence" value="ECO:0007669"/>
    <property type="project" value="UniProtKB-KW"/>
</dbReference>
<dbReference type="GO" id="GO:0016887">
    <property type="term" value="F:ATP hydrolysis activity"/>
    <property type="evidence" value="ECO:0007669"/>
    <property type="project" value="InterPro"/>
</dbReference>
<dbReference type="GO" id="GO:0022857">
    <property type="term" value="F:transmembrane transporter activity"/>
    <property type="evidence" value="ECO:0007669"/>
    <property type="project" value="TreeGrafter"/>
</dbReference>
<dbReference type="GO" id="GO:0046677">
    <property type="term" value="P:response to antibiotic"/>
    <property type="evidence" value="ECO:0007669"/>
    <property type="project" value="UniProtKB-KW"/>
</dbReference>
<dbReference type="CDD" id="cd03255">
    <property type="entry name" value="ABC_MJ0796_LolCDE_FtsE"/>
    <property type="match status" value="1"/>
</dbReference>
<dbReference type="FunFam" id="3.40.50.300:FF:000032">
    <property type="entry name" value="Export ABC transporter ATP-binding protein"/>
    <property type="match status" value="1"/>
</dbReference>
<dbReference type="Gene3D" id="3.40.50.300">
    <property type="entry name" value="P-loop containing nucleotide triphosphate hydrolases"/>
    <property type="match status" value="1"/>
</dbReference>
<dbReference type="InterPro" id="IPR003593">
    <property type="entry name" value="AAA+_ATPase"/>
</dbReference>
<dbReference type="InterPro" id="IPR003838">
    <property type="entry name" value="ABC3_permease_C"/>
</dbReference>
<dbReference type="InterPro" id="IPR003439">
    <property type="entry name" value="ABC_transporter-like_ATP-bd"/>
</dbReference>
<dbReference type="InterPro" id="IPR017871">
    <property type="entry name" value="ABC_transporter-like_CS"/>
</dbReference>
<dbReference type="InterPro" id="IPR017911">
    <property type="entry name" value="MacB-like_ATP-bd"/>
</dbReference>
<dbReference type="InterPro" id="IPR025857">
    <property type="entry name" value="MacB_PCD"/>
</dbReference>
<dbReference type="InterPro" id="IPR050250">
    <property type="entry name" value="Macrolide_Exporter_MacB"/>
</dbReference>
<dbReference type="InterPro" id="IPR027417">
    <property type="entry name" value="P-loop_NTPase"/>
</dbReference>
<dbReference type="NCBIfam" id="NF007826">
    <property type="entry name" value="PRK10535.1"/>
    <property type="match status" value="1"/>
</dbReference>
<dbReference type="PANTHER" id="PTHR30572:SF7">
    <property type="entry name" value="MACROLIDE EXPORT ATP-BINDING_PERMEASE PROTEIN MACB"/>
    <property type="match status" value="1"/>
</dbReference>
<dbReference type="PANTHER" id="PTHR30572">
    <property type="entry name" value="MEMBRANE COMPONENT OF TRANSPORTER-RELATED"/>
    <property type="match status" value="1"/>
</dbReference>
<dbReference type="Pfam" id="PF00005">
    <property type="entry name" value="ABC_tran"/>
    <property type="match status" value="1"/>
</dbReference>
<dbReference type="Pfam" id="PF02687">
    <property type="entry name" value="FtsX"/>
    <property type="match status" value="1"/>
</dbReference>
<dbReference type="Pfam" id="PF12704">
    <property type="entry name" value="MacB_PCD"/>
    <property type="match status" value="1"/>
</dbReference>
<dbReference type="SMART" id="SM00382">
    <property type="entry name" value="AAA"/>
    <property type="match status" value="1"/>
</dbReference>
<dbReference type="SUPFAM" id="SSF52540">
    <property type="entry name" value="P-loop containing nucleoside triphosphate hydrolases"/>
    <property type="match status" value="1"/>
</dbReference>
<dbReference type="PROSITE" id="PS00211">
    <property type="entry name" value="ABC_TRANSPORTER_1"/>
    <property type="match status" value="1"/>
</dbReference>
<dbReference type="PROSITE" id="PS50893">
    <property type="entry name" value="ABC_TRANSPORTER_2"/>
    <property type="match status" value="1"/>
</dbReference>
<dbReference type="PROSITE" id="PS51267">
    <property type="entry name" value="MACB"/>
    <property type="match status" value="1"/>
</dbReference>
<organism>
    <name type="scientific">Escherichia coli O157:H7</name>
    <dbReference type="NCBI Taxonomy" id="83334"/>
    <lineage>
        <taxon>Bacteria</taxon>
        <taxon>Pseudomonadati</taxon>
        <taxon>Pseudomonadota</taxon>
        <taxon>Gammaproteobacteria</taxon>
        <taxon>Enterobacterales</taxon>
        <taxon>Enterobacteriaceae</taxon>
        <taxon>Escherichia</taxon>
    </lineage>
</organism>
<gene>
    <name evidence="1" type="primary">macB</name>
    <name type="ordered locus">Z1116</name>
    <name type="ordered locus">ECs0965</name>
</gene>